<feature type="chain" id="PRO_0000148890" description="Uncharacterized HTH-type transcriptional regulator Rv3095">
    <location>
        <begin position="1"/>
        <end position="158"/>
    </location>
</feature>
<feature type="domain" description="HTH hxlR-type" evidence="1">
    <location>
        <begin position="13"/>
        <end position="110"/>
    </location>
</feature>
<evidence type="ECO:0000255" key="1">
    <source>
        <dbReference type="PROSITE-ProRule" id="PRU00435"/>
    </source>
</evidence>
<name>Y3095_MYCTU</name>
<reference key="1">
    <citation type="journal article" date="1998" name="Nature">
        <title>Deciphering the biology of Mycobacterium tuberculosis from the complete genome sequence.</title>
        <authorList>
            <person name="Cole S.T."/>
            <person name="Brosch R."/>
            <person name="Parkhill J."/>
            <person name="Garnier T."/>
            <person name="Churcher C.M."/>
            <person name="Harris D.E."/>
            <person name="Gordon S.V."/>
            <person name="Eiglmeier K."/>
            <person name="Gas S."/>
            <person name="Barry C.E. III"/>
            <person name="Tekaia F."/>
            <person name="Badcock K."/>
            <person name="Basham D."/>
            <person name="Brown D."/>
            <person name="Chillingworth T."/>
            <person name="Connor R."/>
            <person name="Davies R.M."/>
            <person name="Devlin K."/>
            <person name="Feltwell T."/>
            <person name="Gentles S."/>
            <person name="Hamlin N."/>
            <person name="Holroyd S."/>
            <person name="Hornsby T."/>
            <person name="Jagels K."/>
            <person name="Krogh A."/>
            <person name="McLean J."/>
            <person name="Moule S."/>
            <person name="Murphy L.D."/>
            <person name="Oliver S."/>
            <person name="Osborne J."/>
            <person name="Quail M.A."/>
            <person name="Rajandream M.A."/>
            <person name="Rogers J."/>
            <person name="Rutter S."/>
            <person name="Seeger K."/>
            <person name="Skelton S."/>
            <person name="Squares S."/>
            <person name="Squares R."/>
            <person name="Sulston J.E."/>
            <person name="Taylor K."/>
            <person name="Whitehead S."/>
            <person name="Barrell B.G."/>
        </authorList>
    </citation>
    <scope>NUCLEOTIDE SEQUENCE [LARGE SCALE GENOMIC DNA]</scope>
    <source>
        <strain>ATCC 25618 / H37Rv</strain>
    </source>
</reference>
<reference key="2">
    <citation type="journal article" date="2011" name="Mol. Cell. Proteomics">
        <title>Proteogenomic analysis of Mycobacterium tuberculosis by high resolution mass spectrometry.</title>
        <authorList>
            <person name="Kelkar D.S."/>
            <person name="Kumar D."/>
            <person name="Kumar P."/>
            <person name="Balakrishnan L."/>
            <person name="Muthusamy B."/>
            <person name="Yadav A.K."/>
            <person name="Shrivastava P."/>
            <person name="Marimuthu A."/>
            <person name="Anand S."/>
            <person name="Sundaram H."/>
            <person name="Kingsbury R."/>
            <person name="Harsha H.C."/>
            <person name="Nair B."/>
            <person name="Prasad T.S."/>
            <person name="Chauhan D.S."/>
            <person name="Katoch K."/>
            <person name="Katoch V.M."/>
            <person name="Kumar P."/>
            <person name="Chaerkady R."/>
            <person name="Ramachandran S."/>
            <person name="Dash D."/>
            <person name="Pandey A."/>
        </authorList>
    </citation>
    <scope>IDENTIFICATION BY MASS SPECTROMETRY [LARGE SCALE ANALYSIS]</scope>
    <source>
        <strain>ATCC 25618 / H37Rv</strain>
    </source>
</reference>
<proteinExistence type="evidence at protein level"/>
<gene>
    <name type="ordered locus">Rv3095</name>
    <name type="ORF">MTCY164.06</name>
</gene>
<sequence>MAVSDLSHRFEGESVGRALELVGERWTLLILREAFFGVRRFGQLARNLGIPRPTLSSRLRMLVEVGLFDRVPYSSDPERHEYRLTEAGRDLFAAIVVLMQWGDEYLPRPEGPPIKLRHHTCGEHADPRLICTHCGEEITARNVTPEPGPGFKAKLASS</sequence>
<protein>
    <recommendedName>
        <fullName>Uncharacterized HTH-type transcriptional regulator Rv3095</fullName>
    </recommendedName>
</protein>
<organism>
    <name type="scientific">Mycobacterium tuberculosis (strain ATCC 25618 / H37Rv)</name>
    <dbReference type="NCBI Taxonomy" id="83332"/>
    <lineage>
        <taxon>Bacteria</taxon>
        <taxon>Bacillati</taxon>
        <taxon>Actinomycetota</taxon>
        <taxon>Actinomycetes</taxon>
        <taxon>Mycobacteriales</taxon>
        <taxon>Mycobacteriaceae</taxon>
        <taxon>Mycobacterium</taxon>
        <taxon>Mycobacterium tuberculosis complex</taxon>
    </lineage>
</organism>
<keyword id="KW-0238">DNA-binding</keyword>
<keyword id="KW-1185">Reference proteome</keyword>
<keyword id="KW-0804">Transcription</keyword>
<keyword id="KW-0805">Transcription regulation</keyword>
<accession>P9WMG3</accession>
<accession>L0TEB6</accession>
<accession>O05774</accession>
<accession>P0A648</accession>
<dbReference type="EMBL" id="AL123456">
    <property type="protein sequence ID" value="CCP45904.1"/>
    <property type="molecule type" value="Genomic_DNA"/>
</dbReference>
<dbReference type="PIR" id="F70918">
    <property type="entry name" value="F70918"/>
</dbReference>
<dbReference type="RefSeq" id="NP_217611.1">
    <property type="nucleotide sequence ID" value="NC_000962.3"/>
</dbReference>
<dbReference type="RefSeq" id="WP_003416099.1">
    <property type="nucleotide sequence ID" value="NZ_NVQJ01000011.1"/>
</dbReference>
<dbReference type="SMR" id="P9WMG3"/>
<dbReference type="FunCoup" id="P9WMG3">
    <property type="interactions" value="4"/>
</dbReference>
<dbReference type="STRING" id="83332.Rv3095"/>
<dbReference type="PaxDb" id="83332-Rv3095"/>
<dbReference type="GeneID" id="888679"/>
<dbReference type="KEGG" id="mtu:Rv3095"/>
<dbReference type="KEGG" id="mtv:RVBD_3095"/>
<dbReference type="TubercuList" id="Rv3095"/>
<dbReference type="eggNOG" id="COG1733">
    <property type="taxonomic scope" value="Bacteria"/>
</dbReference>
<dbReference type="InParanoid" id="P9WMG3"/>
<dbReference type="OrthoDB" id="5183359at2"/>
<dbReference type="PhylomeDB" id="P9WMG3"/>
<dbReference type="Proteomes" id="UP000001584">
    <property type="component" value="Chromosome"/>
</dbReference>
<dbReference type="GO" id="GO:0032993">
    <property type="term" value="C:protein-DNA complex"/>
    <property type="evidence" value="ECO:0000318"/>
    <property type="project" value="GO_Central"/>
</dbReference>
<dbReference type="GO" id="GO:0003677">
    <property type="term" value="F:DNA binding"/>
    <property type="evidence" value="ECO:0007669"/>
    <property type="project" value="UniProtKB-KW"/>
</dbReference>
<dbReference type="GO" id="GO:0003700">
    <property type="term" value="F:DNA-binding transcription factor activity"/>
    <property type="evidence" value="ECO:0000318"/>
    <property type="project" value="GO_Central"/>
</dbReference>
<dbReference type="GO" id="GO:0006355">
    <property type="term" value="P:regulation of DNA-templated transcription"/>
    <property type="evidence" value="ECO:0000318"/>
    <property type="project" value="GO_Central"/>
</dbReference>
<dbReference type="CDD" id="cd00090">
    <property type="entry name" value="HTH_ARSR"/>
    <property type="match status" value="1"/>
</dbReference>
<dbReference type="Gene3D" id="1.10.10.10">
    <property type="entry name" value="Winged helix-like DNA-binding domain superfamily/Winged helix DNA-binding domain"/>
    <property type="match status" value="1"/>
</dbReference>
<dbReference type="InterPro" id="IPR011991">
    <property type="entry name" value="ArsR-like_HTH"/>
</dbReference>
<dbReference type="InterPro" id="IPR002577">
    <property type="entry name" value="HTH_HxlR"/>
</dbReference>
<dbReference type="InterPro" id="IPR036388">
    <property type="entry name" value="WH-like_DNA-bd_sf"/>
</dbReference>
<dbReference type="InterPro" id="IPR036390">
    <property type="entry name" value="WH_DNA-bd_sf"/>
</dbReference>
<dbReference type="PANTHER" id="PTHR33204">
    <property type="entry name" value="TRANSCRIPTIONAL REGULATOR, MARR FAMILY"/>
    <property type="match status" value="1"/>
</dbReference>
<dbReference type="PANTHER" id="PTHR33204:SF18">
    <property type="entry name" value="TRANSCRIPTIONAL REGULATORY PROTEIN"/>
    <property type="match status" value="1"/>
</dbReference>
<dbReference type="Pfam" id="PF01638">
    <property type="entry name" value="HxlR"/>
    <property type="match status" value="1"/>
</dbReference>
<dbReference type="SUPFAM" id="SSF46785">
    <property type="entry name" value="Winged helix' DNA-binding domain"/>
    <property type="match status" value="1"/>
</dbReference>
<dbReference type="PROSITE" id="PS51118">
    <property type="entry name" value="HTH_HXLR"/>
    <property type="match status" value="1"/>
</dbReference>